<keyword id="KW-0238">DNA-binding</keyword>
<keyword id="KW-1185">Reference proteome</keyword>
<dbReference type="EMBL" id="AE006470">
    <property type="protein sequence ID" value="AAM73350.1"/>
    <property type="molecule type" value="Genomic_DNA"/>
</dbReference>
<dbReference type="RefSeq" id="NP_663008.1">
    <property type="nucleotide sequence ID" value="NC_002932.3"/>
</dbReference>
<dbReference type="SMR" id="Q8KAM2"/>
<dbReference type="STRING" id="194439.CT2134"/>
<dbReference type="EnsemblBacteria" id="AAM73350">
    <property type="protein sequence ID" value="AAM73350"/>
    <property type="gene ID" value="CT2134"/>
</dbReference>
<dbReference type="KEGG" id="cte:CT2134"/>
<dbReference type="PATRIC" id="fig|194439.7.peg.1935"/>
<dbReference type="eggNOG" id="COG0629">
    <property type="taxonomic scope" value="Bacteria"/>
</dbReference>
<dbReference type="HOGENOM" id="CLU_078758_6_0_10"/>
<dbReference type="OrthoDB" id="9809878at2"/>
<dbReference type="Proteomes" id="UP000001007">
    <property type="component" value="Chromosome"/>
</dbReference>
<dbReference type="GO" id="GO:0009295">
    <property type="term" value="C:nucleoid"/>
    <property type="evidence" value="ECO:0007669"/>
    <property type="project" value="TreeGrafter"/>
</dbReference>
<dbReference type="GO" id="GO:0003697">
    <property type="term" value="F:single-stranded DNA binding"/>
    <property type="evidence" value="ECO:0007669"/>
    <property type="project" value="UniProtKB-UniRule"/>
</dbReference>
<dbReference type="GO" id="GO:0006260">
    <property type="term" value="P:DNA replication"/>
    <property type="evidence" value="ECO:0007669"/>
    <property type="project" value="InterPro"/>
</dbReference>
<dbReference type="CDD" id="cd04496">
    <property type="entry name" value="SSB_OBF"/>
    <property type="match status" value="1"/>
</dbReference>
<dbReference type="Gene3D" id="2.40.50.140">
    <property type="entry name" value="Nucleic acid-binding proteins"/>
    <property type="match status" value="1"/>
</dbReference>
<dbReference type="HAMAP" id="MF_00984">
    <property type="entry name" value="SSB"/>
    <property type="match status" value="1"/>
</dbReference>
<dbReference type="InterPro" id="IPR012340">
    <property type="entry name" value="NA-bd_OB-fold"/>
</dbReference>
<dbReference type="InterPro" id="IPR000424">
    <property type="entry name" value="Primosome_PriB/ssb"/>
</dbReference>
<dbReference type="InterPro" id="IPR011344">
    <property type="entry name" value="ssDNA-bd"/>
</dbReference>
<dbReference type="NCBIfam" id="TIGR00621">
    <property type="entry name" value="ssb"/>
    <property type="match status" value="1"/>
</dbReference>
<dbReference type="PANTHER" id="PTHR10302">
    <property type="entry name" value="SINGLE-STRANDED DNA-BINDING PROTEIN"/>
    <property type="match status" value="1"/>
</dbReference>
<dbReference type="PANTHER" id="PTHR10302:SF27">
    <property type="entry name" value="SINGLE-STRANDED DNA-BINDING PROTEIN"/>
    <property type="match status" value="1"/>
</dbReference>
<dbReference type="Pfam" id="PF00436">
    <property type="entry name" value="SSB"/>
    <property type="match status" value="1"/>
</dbReference>
<dbReference type="PIRSF" id="PIRSF002070">
    <property type="entry name" value="SSB"/>
    <property type="match status" value="1"/>
</dbReference>
<dbReference type="SUPFAM" id="SSF50249">
    <property type="entry name" value="Nucleic acid-binding proteins"/>
    <property type="match status" value="1"/>
</dbReference>
<dbReference type="PROSITE" id="PS50935">
    <property type="entry name" value="SSB"/>
    <property type="match status" value="1"/>
</dbReference>
<reference key="1">
    <citation type="journal article" date="2002" name="Proc. Natl. Acad. Sci. U.S.A.">
        <title>The complete genome sequence of Chlorobium tepidum TLS, a photosynthetic, anaerobic, green-sulfur bacterium.</title>
        <authorList>
            <person name="Eisen J.A."/>
            <person name="Nelson K.E."/>
            <person name="Paulsen I.T."/>
            <person name="Heidelberg J.F."/>
            <person name="Wu M."/>
            <person name="Dodson R.J."/>
            <person name="DeBoy R.T."/>
            <person name="Gwinn M.L."/>
            <person name="Nelson W.C."/>
            <person name="Haft D.H."/>
            <person name="Hickey E.K."/>
            <person name="Peterson J.D."/>
            <person name="Durkin A.S."/>
            <person name="Kolonay J.F."/>
            <person name="Yang F."/>
            <person name="Holt I.E."/>
            <person name="Umayam L.A."/>
            <person name="Mason T.M."/>
            <person name="Brenner M."/>
            <person name="Shea T.P."/>
            <person name="Parksey D.S."/>
            <person name="Nierman W.C."/>
            <person name="Feldblyum T.V."/>
            <person name="Hansen C.L."/>
            <person name="Craven M.B."/>
            <person name="Radune D."/>
            <person name="Vamathevan J.J."/>
            <person name="Khouri H.M."/>
            <person name="White O."/>
            <person name="Gruber T.M."/>
            <person name="Ketchum K.A."/>
            <person name="Venter J.C."/>
            <person name="Tettelin H."/>
            <person name="Bryant D.A."/>
            <person name="Fraser C.M."/>
        </authorList>
    </citation>
    <scope>NUCLEOTIDE SEQUENCE [LARGE SCALE GENOMIC DNA]</scope>
    <source>
        <strain>ATCC 49652 / DSM 12025 / NBRC 103806 / TLS</strain>
    </source>
</reference>
<gene>
    <name type="primary">ssb2</name>
    <name type="ordered locus">CT2134</name>
</gene>
<protein>
    <recommendedName>
        <fullName evidence="1">Single-stranded DNA-binding protein 2</fullName>
        <shortName evidence="1">SSB 2</shortName>
    </recommendedName>
</protein>
<organism>
    <name type="scientific">Chlorobaculum tepidum (strain ATCC 49652 / DSM 12025 / NBRC 103806 / TLS)</name>
    <name type="common">Chlorobium tepidum</name>
    <dbReference type="NCBI Taxonomy" id="194439"/>
    <lineage>
        <taxon>Bacteria</taxon>
        <taxon>Pseudomonadati</taxon>
        <taxon>Chlorobiota</taxon>
        <taxon>Chlorobiia</taxon>
        <taxon>Chlorobiales</taxon>
        <taxon>Chlorobiaceae</taxon>
        <taxon>Chlorobaculum</taxon>
    </lineage>
</organism>
<accession>Q8KAM2</accession>
<name>SSB2_CHLTE</name>
<comment type="subunit">
    <text evidence="1">Homotetramer.</text>
</comment>
<feature type="chain" id="PRO_0000096026" description="Single-stranded DNA-binding protein 2">
    <location>
        <begin position="1"/>
        <end position="148"/>
    </location>
</feature>
<feature type="domain" description="SSB" evidence="1">
    <location>
        <begin position="4"/>
        <end position="109"/>
    </location>
</feature>
<sequence length="148" mass="16992">MPEINSVIIAGNLTKDPVFRQTNSGGTPVVNFSIACNRRFRDSNHQWQEDVCYVGVVAWNKLAESCRDNLRKSSAVLVDGELQSRTWKAQDGTSRTVVEIKARRIQFLNKRKKNGEDDEEGFIEDDTHETHHLDDDGHMYEYKYLSSD</sequence>
<evidence type="ECO:0000255" key="1">
    <source>
        <dbReference type="HAMAP-Rule" id="MF_00984"/>
    </source>
</evidence>
<proteinExistence type="inferred from homology"/>